<comment type="function">
    <text evidence="6 7 8 9">Dehydrogenase; part of the Tox1B locus, one of the 2 loci that mediate the biosynthesis of T-toxin, a family of linear polyketides 37 to 45 carbons in length, of which the major component is 41 carbons, and which leads to high virulence to maize (PubMed:20192833, PubMed:8953776). One of the PKSs (PKS1 or PKS2) could synthesize a precursor, used subsequently by the other PKS as starter unit, to add additional carbons (PubMed:16529376). Variability in the length of the final carbon backbone C35-47 could be achieved by varying the number of condensation cycles, or use of different starter or extender units or might be due to decarboxylation of the penultimate product, catalyzed by DEC1 (PubMed:12236595). Additional proteins are required for the biosynthesis of T-toxin, including oxidoreductases RED1, RED2, RED3, LAM1 and OXI1, as well as esterase TOX9 (PubMed:20192833).</text>
</comment>
<comment type="catalytic activity">
    <reaction evidence="5">
        <text>a primary alcohol + NAD(+) = an aldehyde + NADH + H(+)</text>
        <dbReference type="Rhea" id="RHEA:10736"/>
        <dbReference type="ChEBI" id="CHEBI:15378"/>
        <dbReference type="ChEBI" id="CHEBI:15734"/>
        <dbReference type="ChEBI" id="CHEBI:17478"/>
        <dbReference type="ChEBI" id="CHEBI:57540"/>
        <dbReference type="ChEBI" id="CHEBI:57945"/>
        <dbReference type="EC" id="1.1.1.1"/>
    </reaction>
</comment>
<comment type="catalytic activity">
    <reaction evidence="5">
        <text>a secondary alcohol + NAD(+) = a ketone + NADH + H(+)</text>
        <dbReference type="Rhea" id="RHEA:10740"/>
        <dbReference type="ChEBI" id="CHEBI:15378"/>
        <dbReference type="ChEBI" id="CHEBI:17087"/>
        <dbReference type="ChEBI" id="CHEBI:35681"/>
        <dbReference type="ChEBI" id="CHEBI:57540"/>
        <dbReference type="ChEBI" id="CHEBI:57945"/>
        <dbReference type="EC" id="1.1.1.1"/>
    </reaction>
</comment>
<comment type="pathway">
    <text evidence="8">Mycotoxin biosynthesis.</text>
</comment>
<comment type="subcellular location">
    <subcellularLocation>
        <location evidence="3">Membrane</location>
        <topology evidence="3">Multi-pass membrane protein</topology>
    </subcellularLocation>
</comment>
<comment type="disruption phenotype">
    <text evidence="8">Significantly reduces the production of T-toxin and decreases the virulence to maize (PubMed:20192833).</text>
</comment>
<comment type="similarity">
    <text evidence="12">Belongs to the short-chain dehydrogenases/reductases (SDR) family.</text>
</comment>
<protein>
    <recommendedName>
        <fullName evidence="10">Dehydrogenase RED2</fullName>
        <ecNumber evidence="5">1.1.1.1</ecNumber>
    </recommendedName>
    <alternativeName>
        <fullName evidence="12">T-toxin biosynthesis protein RED2</fullName>
    </alternativeName>
</protein>
<keyword id="KW-0325">Glycoprotein</keyword>
<keyword id="KW-0472">Membrane</keyword>
<keyword id="KW-0521">NADP</keyword>
<keyword id="KW-0560">Oxidoreductase</keyword>
<keyword id="KW-0812">Transmembrane</keyword>
<keyword id="KW-1133">Transmembrane helix</keyword>
<evidence type="ECO:0000250" key="1">
    <source>
        <dbReference type="UniProtKB" id="L0E2Z4"/>
    </source>
</evidence>
<evidence type="ECO:0000250" key="2">
    <source>
        <dbReference type="UniProtKB" id="O93868"/>
    </source>
</evidence>
<evidence type="ECO:0000255" key="3"/>
<evidence type="ECO:0000255" key="4">
    <source>
        <dbReference type="PROSITE-ProRule" id="PRU00498"/>
    </source>
</evidence>
<evidence type="ECO:0000255" key="5">
    <source>
        <dbReference type="PROSITE-ProRule" id="PRU10001"/>
    </source>
</evidence>
<evidence type="ECO:0000269" key="6">
    <source>
    </source>
</evidence>
<evidence type="ECO:0000269" key="7">
    <source>
    </source>
</evidence>
<evidence type="ECO:0000269" key="8">
    <source>
    </source>
</evidence>
<evidence type="ECO:0000269" key="9">
    <source>
    </source>
</evidence>
<evidence type="ECO:0000303" key="10">
    <source>
    </source>
</evidence>
<evidence type="ECO:0000303" key="11">
    <source>
    </source>
</evidence>
<evidence type="ECO:0000305" key="12"/>
<organism>
    <name type="scientific">Cochliobolus heterostrophus (strain C4 / ATCC 48331 / race T)</name>
    <name type="common">Southern corn leaf blight fungus</name>
    <name type="synonym">Bipolaris maydis</name>
    <dbReference type="NCBI Taxonomy" id="665024"/>
    <lineage>
        <taxon>Eukaryota</taxon>
        <taxon>Fungi</taxon>
        <taxon>Dikarya</taxon>
        <taxon>Ascomycota</taxon>
        <taxon>Pezizomycotina</taxon>
        <taxon>Dothideomycetes</taxon>
        <taxon>Pleosporomycetidae</taxon>
        <taxon>Pleosporales</taxon>
        <taxon>Pleosporineae</taxon>
        <taxon>Pleosporaceae</taxon>
        <taxon>Bipolaris</taxon>
    </lineage>
</organism>
<proteinExistence type="inferred from homology"/>
<feature type="chain" id="PRO_0000437643" description="Dehydrogenase RED2">
    <location>
        <begin position="1"/>
        <end position="265"/>
    </location>
</feature>
<feature type="transmembrane region" description="Helical" evidence="3">
    <location>
        <begin position="6"/>
        <end position="26"/>
    </location>
</feature>
<feature type="transmembrane region" description="Helical" evidence="3">
    <location>
        <begin position="47"/>
        <end position="67"/>
    </location>
</feature>
<feature type="active site" description="Proton donor" evidence="2">
    <location>
        <position position="216"/>
    </location>
</feature>
<feature type="active site" description="Proton acceptor" evidence="5">
    <location>
        <position position="228"/>
    </location>
</feature>
<feature type="active site" description="Lowers pKa of active site Tyr" evidence="2">
    <location>
        <position position="232"/>
    </location>
</feature>
<feature type="binding site" evidence="1">
    <location>
        <position position="89"/>
    </location>
    <ligand>
        <name>NADP(+)</name>
        <dbReference type="ChEBI" id="CHEBI:58349"/>
    </ligand>
</feature>
<feature type="binding site" evidence="1">
    <location>
        <position position="136"/>
    </location>
    <ligand>
        <name>NADP(+)</name>
        <dbReference type="ChEBI" id="CHEBI:58349"/>
    </ligand>
</feature>
<feature type="binding site" evidence="2">
    <location>
        <position position="163"/>
    </location>
    <ligand>
        <name>NADP(+)</name>
        <dbReference type="ChEBI" id="CHEBI:58349"/>
    </ligand>
</feature>
<feature type="binding site" evidence="2">
    <location>
        <position position="228"/>
    </location>
    <ligand>
        <name>NADP(+)</name>
        <dbReference type="ChEBI" id="CHEBI:58349"/>
    </ligand>
</feature>
<feature type="binding site" evidence="2">
    <location>
        <position position="232"/>
    </location>
    <ligand>
        <name>NADP(+)</name>
        <dbReference type="ChEBI" id="CHEBI:58349"/>
    </ligand>
</feature>
<feature type="glycosylation site" description="N-linked (GlcNAc...) asparagine" evidence="4">
    <location>
        <position position="45"/>
    </location>
</feature>
<feature type="glycosylation site" description="N-linked (GlcNAc...) asparagine" evidence="4">
    <location>
        <position position="74"/>
    </location>
</feature>
<feature type="glycosylation site" description="N-linked (GlcNAc...) asparagine" evidence="4">
    <location>
        <position position="127"/>
    </location>
</feature>
<feature type="glycosylation site" description="N-linked (GlcNAc...) asparagine" evidence="4">
    <location>
        <position position="176"/>
    </location>
</feature>
<dbReference type="EC" id="1.1.1.1" evidence="5"/>
<dbReference type="EMBL" id="AF525909">
    <property type="protein sequence ID" value="ACP34152.1"/>
    <property type="molecule type" value="Genomic_DNA"/>
</dbReference>
<dbReference type="EMBL" id="KB733569">
    <property type="protein sequence ID" value="ENH98523.1"/>
    <property type="molecule type" value="Genomic_DNA"/>
</dbReference>
<dbReference type="RefSeq" id="XP_014072433.1">
    <property type="nucleotide sequence ID" value="XM_014216958.1"/>
</dbReference>
<dbReference type="SMR" id="N4WE43"/>
<dbReference type="GlyCosmos" id="N4WE43">
    <property type="glycosylation" value="4 sites, No reported glycans"/>
</dbReference>
<dbReference type="GeneID" id="25839400"/>
<dbReference type="HOGENOM" id="CLU_010194_5_0_1"/>
<dbReference type="OrthoDB" id="10253736at2759"/>
<dbReference type="PHI-base" id="PHI:2835"/>
<dbReference type="Proteomes" id="UP000012338">
    <property type="component" value="Unassembled WGS sequence"/>
</dbReference>
<dbReference type="GO" id="GO:0016020">
    <property type="term" value="C:membrane"/>
    <property type="evidence" value="ECO:0007669"/>
    <property type="project" value="UniProtKB-SubCell"/>
</dbReference>
<dbReference type="GO" id="GO:0004022">
    <property type="term" value="F:alcohol dehydrogenase (NAD+) activity"/>
    <property type="evidence" value="ECO:0007669"/>
    <property type="project" value="UniProtKB-EC"/>
</dbReference>
<dbReference type="Gene3D" id="3.40.50.720">
    <property type="entry name" value="NAD(P)-binding Rossmann-like Domain"/>
    <property type="match status" value="1"/>
</dbReference>
<dbReference type="InterPro" id="IPR036291">
    <property type="entry name" value="NAD(P)-bd_dom_sf"/>
</dbReference>
<dbReference type="InterPro" id="IPR020904">
    <property type="entry name" value="Sc_DH/Rdtase_CS"/>
</dbReference>
<dbReference type="InterPro" id="IPR002347">
    <property type="entry name" value="SDR_fam"/>
</dbReference>
<dbReference type="PANTHER" id="PTHR24322">
    <property type="entry name" value="PKSB"/>
    <property type="match status" value="1"/>
</dbReference>
<dbReference type="PANTHER" id="PTHR24322:SF736">
    <property type="entry name" value="RETINOL DEHYDROGENASE 10"/>
    <property type="match status" value="1"/>
</dbReference>
<dbReference type="Pfam" id="PF00106">
    <property type="entry name" value="adh_short"/>
    <property type="match status" value="1"/>
</dbReference>
<dbReference type="PRINTS" id="PR00081">
    <property type="entry name" value="GDHRDH"/>
</dbReference>
<dbReference type="PRINTS" id="PR00080">
    <property type="entry name" value="SDRFAMILY"/>
</dbReference>
<dbReference type="SUPFAM" id="SSF51735">
    <property type="entry name" value="NAD(P)-binding Rossmann-fold domains"/>
    <property type="match status" value="1"/>
</dbReference>
<dbReference type="PROSITE" id="PS00061">
    <property type="entry name" value="ADH_SHORT"/>
    <property type="match status" value="1"/>
</dbReference>
<sequence>MWKIESFLLSKLFLCIALCTAYVAFSSAMMEPGLWLLSRPIVPLNRTSTVFGLTIVAIGLSALSSWLSKLTLNNFTSDDSWDWSQEIVVVTGASSGIGAEIVRLLAELSIKTFILDPVPPDNSVLKNGSVHYYKVDITKPKEVSAAAREIQVKFSSPTVLINNAGVGLAKNLLDENETERRHLMNVNLLSQFTTVQEFLPAMIEKNHGHIVTMASSASYISSPQIVSYAASKAALVGFHEGLGIELVKRYNAKKIRTTLVFAPLL</sequence>
<name>RED2_COCH4</name>
<reference key="1">
    <citation type="journal article" date="2010" name="Mol. Plant Microbe Interact.">
        <title>Six new genes required for production of T-toxin, a polyketide determinant of high virulence of Cochliobolus heterostrophus to maize.</title>
        <authorList>
            <person name="Inderbitzin P."/>
            <person name="Asvarak T."/>
            <person name="Turgeon B.G."/>
        </authorList>
    </citation>
    <scope>NUCLEOTIDE SEQUENCE [GENOMIC DNA]</scope>
    <scope>FUNCTION</scope>
    <scope>DISRUPTION PHENOTYPE</scope>
    <source>
        <strain>C4 / ATCC 48331 / race T</strain>
    </source>
</reference>
<reference key="2">
    <citation type="journal article" date="2012" name="PLoS Pathog.">
        <title>Diverse lifestyles and strategies of plant pathogenesis encoded in the genomes of eighteen Dothideomycetes fungi.</title>
        <authorList>
            <person name="Ohm R.A."/>
            <person name="Feau N."/>
            <person name="Henrissat B."/>
            <person name="Schoch C.L."/>
            <person name="Horwitz B.A."/>
            <person name="Barry K.W."/>
            <person name="Condon B.J."/>
            <person name="Copeland A.C."/>
            <person name="Dhillon B."/>
            <person name="Glaser F."/>
            <person name="Hesse C.N."/>
            <person name="Kosti I."/>
            <person name="LaButti K."/>
            <person name="Lindquist E.A."/>
            <person name="Lucas S."/>
            <person name="Salamov A.A."/>
            <person name="Bradshaw R.E."/>
            <person name="Ciuffetti L."/>
            <person name="Hamelin R.C."/>
            <person name="Kema G.H.J."/>
            <person name="Lawrence C."/>
            <person name="Scott J.A."/>
            <person name="Spatafora J.W."/>
            <person name="Turgeon B.G."/>
            <person name="de Wit P.J.G.M."/>
            <person name="Zhong S."/>
            <person name="Goodwin S.B."/>
            <person name="Grigoriev I.V."/>
        </authorList>
    </citation>
    <scope>NUCLEOTIDE SEQUENCE [LARGE SCALE GENOMIC DNA]</scope>
    <source>
        <strain>C4 / ATCC 48331 / race T</strain>
    </source>
</reference>
<reference key="3">
    <citation type="journal article" date="2013" name="PLoS Genet.">
        <title>Comparative genome structure, secondary metabolite, and effector coding capacity across Cochliobolus pathogens.</title>
        <authorList>
            <person name="Condon B.J."/>
            <person name="Leng Y."/>
            <person name="Wu D."/>
            <person name="Bushley K.E."/>
            <person name="Ohm R.A."/>
            <person name="Otillar R."/>
            <person name="Martin J."/>
            <person name="Schackwitz W."/>
            <person name="Grimwood J."/>
            <person name="MohdZainudin N."/>
            <person name="Xue C."/>
            <person name="Wang R."/>
            <person name="Manning V.A."/>
            <person name="Dhillon B."/>
            <person name="Tu Z.J."/>
            <person name="Steffenson B.J."/>
            <person name="Salamov A."/>
            <person name="Sun H."/>
            <person name="Lowry S."/>
            <person name="LaButti K."/>
            <person name="Han J."/>
            <person name="Copeland A."/>
            <person name="Lindquist E."/>
            <person name="Barry K."/>
            <person name="Schmutz J."/>
            <person name="Baker S.E."/>
            <person name="Ciuffetti L.M."/>
            <person name="Grigoriev I.V."/>
            <person name="Zhong S."/>
            <person name="Turgeon B.G."/>
        </authorList>
    </citation>
    <scope>NUCLEOTIDE SEQUENCE [LARGE SCALE GENOMIC DNA]</scope>
    <source>
        <strain>C4 / ATCC 48331 / race T</strain>
    </source>
</reference>
<reference key="4">
    <citation type="journal article" date="1996" name="Plant Cell">
        <title>A polyketide synthase is required for fungal virulence and production of the polyketide T-toxin.</title>
        <authorList>
            <person name="Yang G."/>
            <person name="Rose M.S."/>
            <person name="Turgeon B.G."/>
            <person name="Yoder O.C."/>
        </authorList>
    </citation>
    <scope>FUNCTION</scope>
    <source>
        <strain>C4 / ATCC 48331 / race T</strain>
    </source>
</reference>
<reference key="5">
    <citation type="journal article" date="2002" name="Mol. Plant Microbe Interact.">
        <title>A decarboxylase encoded at the Cochliobolus heterostrophus translocation-associated Tox1B locus is required for polyketide (T-toxin) biosynthesis and high virulence on T-cytoplasm maize.</title>
        <authorList>
            <person name="Rose M.S."/>
            <person name="Yun S.-H."/>
            <person name="Asvarak T."/>
            <person name="Lu S.-W."/>
            <person name="Yoder O.C."/>
            <person name="Turgeon B.G."/>
        </authorList>
    </citation>
    <scope>FUNCTION</scope>
    <source>
        <strain>C4 / ATCC 48331 / race T</strain>
    </source>
</reference>
<reference key="6">
    <citation type="journal article" date="2006" name="Mol. Plant Microbe Interact.">
        <title>Two polyketide synthase-encoding genes are required for biosynthesis of the polyketide virulence factor, T-toxin, by Cochliobolus heterostrophus.</title>
        <authorList>
            <person name="Baker S.E."/>
            <person name="Kroken S."/>
            <person name="Inderbitzin P."/>
            <person name="Asvarak T."/>
            <person name="Li B.Y."/>
            <person name="Shi L."/>
            <person name="Yoder O.C."/>
            <person name="Turgeon B.G."/>
        </authorList>
    </citation>
    <scope>FUNCTION</scope>
</reference>
<gene>
    <name evidence="11" type="primary">RED2</name>
    <name type="ORF">COCC4DRAFT_155544</name>
</gene>
<accession>N4WE43</accession>
<accession>C3JXE8</accession>